<sequence length="124" mass="14526">MLGIDIIKNIRIAKALERFGYHFLNRVYTEYEINLCKMNVECLSGRFAAKEASIKAFSFLSIRRFSFRDFEVVKSKNGIPELRIKDAYINDFLKAQKLKPFISISHEKEFSVAVCYITKEERIC</sequence>
<name>ACPS_HYDS0</name>
<gene>
    <name evidence="1" type="primary">acpS</name>
    <name type="ordered locus">HY04AAS1_0521</name>
</gene>
<proteinExistence type="inferred from homology"/>
<protein>
    <recommendedName>
        <fullName evidence="1">Holo-[acyl-carrier-protein] synthase</fullName>
        <shortName evidence="1">Holo-ACP synthase</shortName>
        <ecNumber evidence="1">2.7.8.7</ecNumber>
    </recommendedName>
    <alternativeName>
        <fullName evidence="1">4'-phosphopantetheinyl transferase AcpS</fullName>
    </alternativeName>
</protein>
<keyword id="KW-0963">Cytoplasm</keyword>
<keyword id="KW-0275">Fatty acid biosynthesis</keyword>
<keyword id="KW-0276">Fatty acid metabolism</keyword>
<keyword id="KW-0444">Lipid biosynthesis</keyword>
<keyword id="KW-0443">Lipid metabolism</keyword>
<keyword id="KW-0460">Magnesium</keyword>
<keyword id="KW-0479">Metal-binding</keyword>
<keyword id="KW-0808">Transferase</keyword>
<reference key="1">
    <citation type="journal article" date="2009" name="J. Bacteriol.">
        <title>Complete and draft genome sequences of six members of the Aquificales.</title>
        <authorList>
            <person name="Reysenbach A.-L."/>
            <person name="Hamamura N."/>
            <person name="Podar M."/>
            <person name="Griffiths E."/>
            <person name="Ferreira S."/>
            <person name="Hochstein R."/>
            <person name="Heidelberg J."/>
            <person name="Johnson J."/>
            <person name="Mead D."/>
            <person name="Pohorille A."/>
            <person name="Sarmiento M."/>
            <person name="Schweighofer K."/>
            <person name="Seshadri R."/>
            <person name="Voytek M.A."/>
        </authorList>
    </citation>
    <scope>NUCLEOTIDE SEQUENCE [LARGE SCALE GENOMIC DNA]</scope>
    <source>
        <strain>Y04AAS1</strain>
    </source>
</reference>
<feature type="chain" id="PRO_1000093883" description="Holo-[acyl-carrier-protein] synthase">
    <location>
        <begin position="1"/>
        <end position="124"/>
    </location>
</feature>
<feature type="binding site" evidence="1">
    <location>
        <position position="5"/>
    </location>
    <ligand>
        <name>Mg(2+)</name>
        <dbReference type="ChEBI" id="CHEBI:18420"/>
    </ligand>
</feature>
<feature type="binding site" evidence="1">
    <location>
        <position position="51"/>
    </location>
    <ligand>
        <name>Mg(2+)</name>
        <dbReference type="ChEBI" id="CHEBI:18420"/>
    </ligand>
</feature>
<organism>
    <name type="scientific">Hydrogenobaculum sp. (strain Y04AAS1)</name>
    <dbReference type="NCBI Taxonomy" id="380749"/>
    <lineage>
        <taxon>Bacteria</taxon>
        <taxon>Pseudomonadati</taxon>
        <taxon>Aquificota</taxon>
        <taxon>Aquificia</taxon>
        <taxon>Aquificales</taxon>
        <taxon>Aquificaceae</taxon>
        <taxon>Hydrogenobaculum</taxon>
    </lineage>
</organism>
<accession>B4U7U7</accession>
<evidence type="ECO:0000255" key="1">
    <source>
        <dbReference type="HAMAP-Rule" id="MF_00101"/>
    </source>
</evidence>
<dbReference type="EC" id="2.7.8.7" evidence="1"/>
<dbReference type="EMBL" id="CP001130">
    <property type="protein sequence ID" value="ACG57208.1"/>
    <property type="molecule type" value="Genomic_DNA"/>
</dbReference>
<dbReference type="RefSeq" id="WP_012513564.1">
    <property type="nucleotide sequence ID" value="NC_011126.1"/>
</dbReference>
<dbReference type="SMR" id="B4U7U7"/>
<dbReference type="STRING" id="380749.HY04AAS1_0521"/>
<dbReference type="KEGG" id="hya:HY04AAS1_0521"/>
<dbReference type="eggNOG" id="COG0736">
    <property type="taxonomic scope" value="Bacteria"/>
</dbReference>
<dbReference type="HOGENOM" id="CLU_089696_2_1_0"/>
<dbReference type="OrthoDB" id="517356at2"/>
<dbReference type="GO" id="GO:0005737">
    <property type="term" value="C:cytoplasm"/>
    <property type="evidence" value="ECO:0007669"/>
    <property type="project" value="UniProtKB-SubCell"/>
</dbReference>
<dbReference type="GO" id="GO:0008897">
    <property type="term" value="F:holo-[acyl-carrier-protein] synthase activity"/>
    <property type="evidence" value="ECO:0007669"/>
    <property type="project" value="UniProtKB-UniRule"/>
</dbReference>
<dbReference type="GO" id="GO:0000287">
    <property type="term" value="F:magnesium ion binding"/>
    <property type="evidence" value="ECO:0007669"/>
    <property type="project" value="UniProtKB-UniRule"/>
</dbReference>
<dbReference type="GO" id="GO:0006633">
    <property type="term" value="P:fatty acid biosynthetic process"/>
    <property type="evidence" value="ECO:0007669"/>
    <property type="project" value="UniProtKB-UniRule"/>
</dbReference>
<dbReference type="Gene3D" id="3.90.470.20">
    <property type="entry name" value="4'-phosphopantetheinyl transferase domain"/>
    <property type="match status" value="1"/>
</dbReference>
<dbReference type="HAMAP" id="MF_00101">
    <property type="entry name" value="AcpS"/>
    <property type="match status" value="1"/>
</dbReference>
<dbReference type="InterPro" id="IPR008278">
    <property type="entry name" value="4-PPantetheinyl_Trfase_dom"/>
</dbReference>
<dbReference type="InterPro" id="IPR037143">
    <property type="entry name" value="4-PPantetheinyl_Trfase_dom_sf"/>
</dbReference>
<dbReference type="InterPro" id="IPR002582">
    <property type="entry name" value="ACPS"/>
</dbReference>
<dbReference type="InterPro" id="IPR004568">
    <property type="entry name" value="Ppantetheine-prot_Trfase_dom"/>
</dbReference>
<dbReference type="NCBIfam" id="TIGR00516">
    <property type="entry name" value="acpS"/>
    <property type="match status" value="1"/>
</dbReference>
<dbReference type="NCBIfam" id="TIGR00556">
    <property type="entry name" value="pantethn_trn"/>
    <property type="match status" value="1"/>
</dbReference>
<dbReference type="Pfam" id="PF01648">
    <property type="entry name" value="ACPS"/>
    <property type="match status" value="1"/>
</dbReference>
<dbReference type="SUPFAM" id="SSF56214">
    <property type="entry name" value="4'-phosphopantetheinyl transferase"/>
    <property type="match status" value="1"/>
</dbReference>
<comment type="function">
    <text evidence="1">Transfers the 4'-phosphopantetheine moiety from coenzyme A to a Ser of acyl-carrier-protein.</text>
</comment>
<comment type="catalytic activity">
    <reaction evidence="1">
        <text>apo-[ACP] + CoA = holo-[ACP] + adenosine 3',5'-bisphosphate + H(+)</text>
        <dbReference type="Rhea" id="RHEA:12068"/>
        <dbReference type="Rhea" id="RHEA-COMP:9685"/>
        <dbReference type="Rhea" id="RHEA-COMP:9690"/>
        <dbReference type="ChEBI" id="CHEBI:15378"/>
        <dbReference type="ChEBI" id="CHEBI:29999"/>
        <dbReference type="ChEBI" id="CHEBI:57287"/>
        <dbReference type="ChEBI" id="CHEBI:58343"/>
        <dbReference type="ChEBI" id="CHEBI:64479"/>
        <dbReference type="EC" id="2.7.8.7"/>
    </reaction>
</comment>
<comment type="cofactor">
    <cofactor evidence="1">
        <name>Mg(2+)</name>
        <dbReference type="ChEBI" id="CHEBI:18420"/>
    </cofactor>
</comment>
<comment type="subcellular location">
    <subcellularLocation>
        <location evidence="1">Cytoplasm</location>
    </subcellularLocation>
</comment>
<comment type="similarity">
    <text evidence="1">Belongs to the P-Pant transferase superfamily. AcpS family.</text>
</comment>